<evidence type="ECO:0000250" key="1"/>
<evidence type="ECO:0000250" key="2">
    <source>
        <dbReference type="UniProtKB" id="D4A3K5"/>
    </source>
</evidence>
<evidence type="ECO:0000250" key="3">
    <source>
        <dbReference type="UniProtKB" id="G3N131"/>
    </source>
</evidence>
<evidence type="ECO:0000250" key="4">
    <source>
        <dbReference type="UniProtKB" id="P43277"/>
    </source>
</evidence>
<evidence type="ECO:0000250" key="5">
    <source>
        <dbReference type="UniProtKB" id="Q02539"/>
    </source>
</evidence>
<evidence type="ECO:0000255" key="6">
    <source>
        <dbReference type="PROSITE-ProRule" id="PRU00837"/>
    </source>
</evidence>
<evidence type="ECO:0000256" key="7">
    <source>
        <dbReference type="SAM" id="MobiDB-lite"/>
    </source>
</evidence>
<evidence type="ECO:0000269" key="8">
    <source>
    </source>
</evidence>
<evidence type="ECO:0000269" key="9">
    <source>
    </source>
</evidence>
<evidence type="ECO:0000269" key="10">
    <source>
    </source>
</evidence>
<evidence type="ECO:0000269" key="11">
    <source>
    </source>
</evidence>
<evidence type="ECO:0000312" key="12">
    <source>
        <dbReference type="MGI" id="MGI:1931523"/>
    </source>
</evidence>
<evidence type="ECO:0007744" key="13">
    <source>
    </source>
</evidence>
<evidence type="ECO:0007744" key="14">
    <source>
    </source>
</evidence>
<sequence>MSETAPVAQAASTATEKPAAAKKTKKPAKAAAPRKKPAGPSVSELIVQAVSSSKERSGVSLAALKKSLAAAGYDVEKNNSRIKLGLKSLVNKGTLVQTKGTGAAGSFKLNKKAESKAITTKVSVKAKASGAAKKPKKTAGAAAKKTVKTPKKPKKPAVSKKTSKSPKKPKVVKAKKVAKSPAKAKAVKPKASKAKVTKPKTPAKPKKAAPKKK</sequence>
<protein>
    <recommendedName>
        <fullName>Histone H1.1</fullName>
    </recommendedName>
    <alternativeName>
        <fullName>H1 VAR.3</fullName>
    </alternativeName>
    <alternativeName>
        <fullName>Histone H1a</fullName>
        <shortName>H1a</shortName>
    </alternativeName>
</protein>
<keyword id="KW-0007">Acetylation</keyword>
<keyword id="KW-0158">Chromosome</keyword>
<keyword id="KW-0164">Citrullination</keyword>
<keyword id="KW-0238">DNA-binding</keyword>
<keyword id="KW-0379">Hydroxylation</keyword>
<keyword id="KW-0539">Nucleus</keyword>
<keyword id="KW-0597">Phosphoprotein</keyword>
<keyword id="KW-1185">Reference proteome</keyword>
<proteinExistence type="evidence at protein level"/>
<feature type="initiator methionine" description="Removed" evidence="14">
    <location>
        <position position="1"/>
    </location>
</feature>
<feature type="chain" id="PRO_0000195914" description="Histone H1.1">
    <location>
        <begin position="2"/>
        <end position="213"/>
    </location>
</feature>
<feature type="domain" description="H15" evidence="6">
    <location>
        <begin position="38"/>
        <end position="111"/>
    </location>
</feature>
<feature type="region of interest" description="Disordered" evidence="7">
    <location>
        <begin position="1"/>
        <end position="43"/>
    </location>
</feature>
<feature type="region of interest" description="Disordered" evidence="7">
    <location>
        <begin position="112"/>
        <end position="213"/>
    </location>
</feature>
<feature type="compositionally biased region" description="Low complexity" evidence="7">
    <location>
        <begin position="8"/>
        <end position="18"/>
    </location>
</feature>
<feature type="compositionally biased region" description="Basic residues" evidence="7">
    <location>
        <begin position="20"/>
        <end position="37"/>
    </location>
</feature>
<feature type="compositionally biased region" description="Low complexity" evidence="7">
    <location>
        <begin position="120"/>
        <end position="144"/>
    </location>
</feature>
<feature type="compositionally biased region" description="Basic residues" evidence="7">
    <location>
        <begin position="145"/>
        <end position="178"/>
    </location>
</feature>
<feature type="compositionally biased region" description="Basic residues" evidence="7">
    <location>
        <begin position="185"/>
        <end position="213"/>
    </location>
</feature>
<feature type="modified residue" description="N-acetylserine" evidence="14">
    <location>
        <position position="2"/>
    </location>
</feature>
<feature type="modified residue" description="Phosphoserine" evidence="2">
    <location>
        <position position="2"/>
    </location>
</feature>
<feature type="modified residue" description="Phosphoserine" evidence="2">
    <location>
        <position position="12"/>
    </location>
</feature>
<feature type="modified residue" description="N6-acetyllysine" evidence="14">
    <location>
        <position position="17"/>
    </location>
</feature>
<feature type="modified residue" description="N6-(beta-hydroxybutyryl)lysine" evidence="4">
    <location>
        <position position="36"/>
    </location>
</feature>
<feature type="modified residue" description="Phosphoserine" evidence="2">
    <location>
        <position position="43"/>
    </location>
</feature>
<feature type="modified residue" description="N6-(beta-hydroxybutyryl)lysine" evidence="4">
    <location>
        <position position="54"/>
    </location>
</feature>
<feature type="modified residue" description="Citrulline" evidence="9">
    <location>
        <position position="56"/>
    </location>
</feature>
<feature type="modified residue" description="N6-(beta-hydroxybutyryl)lysine" evidence="4">
    <location>
        <position position="66"/>
    </location>
</feature>
<feature type="modified residue" description="Phosphoserine" evidence="2">
    <location>
        <position position="67"/>
    </location>
</feature>
<feature type="modified residue" description="N6-acetyllysine" evidence="14">
    <location>
        <position position="77"/>
    </location>
</feature>
<feature type="modified residue" description="N6-(beta-hydroxybutyryl)lysine" evidence="4">
    <location>
        <position position="87"/>
    </location>
</feature>
<feature type="modified residue" description="N6-(beta-hydroxybutyryl)lysine; alternate" evidence="4">
    <location>
        <position position="92"/>
    </location>
</feature>
<feature type="modified residue" description="N6-acetyllysine; alternate" evidence="14">
    <location>
        <position position="92"/>
    </location>
</feature>
<feature type="modified residue" description="Phosphoserine" evidence="3">
    <location>
        <position position="106"/>
    </location>
</feature>
<feature type="modified residue" description="N6-(beta-hydroxybutyryl)lysine" evidence="4">
    <location>
        <position position="108"/>
    </location>
</feature>
<feature type="modified residue" description="N6-acetyllysine" evidence="14">
    <location>
        <position position="121"/>
    </location>
</feature>
<feature type="modified residue" description="Phosphothreonine" evidence="13">
    <location>
        <position position="201"/>
    </location>
</feature>
<name>H11_MOUSE</name>
<comment type="function">
    <text evidence="1">Histone H1 protein binds to linker DNA between nucleosomes forming the macromolecular structure known as the chromatin fiber. Histones H1 are necessary for the condensation of nucleosome chains into higher-order structured fibers. Also acts as a regulator of individual gene transcription through chromatin remodeling, nucleosome spacing and DNA methylation (By similarity).</text>
</comment>
<comment type="subunit">
    <text evidence="1">Interacts with DFFB.</text>
</comment>
<comment type="subcellular location">
    <subcellularLocation>
        <location>Nucleus</location>
    </subcellularLocation>
    <subcellularLocation>
        <location>Chromosome</location>
    </subcellularLocation>
    <text evidence="1">Mainly localizes in euchromatin.</text>
</comment>
<comment type="tissue specificity">
    <text evidence="11">Restricted to thymus, testis and spleen. Present also in lymphocytic and neuronal cells. Increases in testis starting with a low level at day 5 and reaching high concentrations in 20-day old and adult animals.</text>
</comment>
<comment type="domain">
    <text evidence="1">The C-terminal domain is required for high-affinity binding to chromatin.</text>
</comment>
<comment type="PTM">
    <text evidence="10">H1 histones are progressively phosphorylated during the cell cycle, becoming maximally phosphorylated during late G2 phase and M phase, and being dephosphorylated sharply thereafter.</text>
</comment>
<comment type="PTM">
    <text evidence="9">Citrullination at Arg-56 (H1R54ci) by PADI4 takes place within the DNA-binding site of H1 and results in its displacement from chromatin and global chromatin decondensation, thereby promoting pluripotency and stem cell maintenance.</text>
</comment>
<comment type="PTM">
    <text evidence="4">Hydroxybutyrylation of histones is induced by starvation.</text>
</comment>
<comment type="disruption phenotype">
    <text evidence="8">Deficient-mice developed normally until the adult stage. No anatomic abnormalities are detected, mice are fertile and they show normal spermatogenesis and testicular morphology. The lack of phenotype may be due to a compensatory function of other histone H1 subtypes.</text>
</comment>
<comment type="similarity">
    <text evidence="6">Belongs to the histone H1/H5 family.</text>
</comment>
<reference key="1">
    <citation type="journal article" date="1994" name="Nucleic Acids Res.">
        <title>Isolation and characterization of two replication-dependent mouse H1 histone genes.</title>
        <authorList>
            <person name="Dong Y."/>
            <person name="Sirotkin A.M."/>
            <person name="Yang Y.-S."/>
            <person name="Brown D.T."/>
            <person name="Sittman D.B."/>
            <person name="Skoultchi A.I."/>
        </authorList>
    </citation>
    <scope>NUCLEOTIDE SEQUENCE [GENOMIC DNA]</scope>
    <source>
        <strain>BALB/cJ</strain>
    </source>
</reference>
<reference key="2">
    <citation type="journal article" date="1998" name="Biochim. Biophys. Acta">
        <title>Expression of murine H1 histone genes during postnatal development.</title>
        <authorList>
            <person name="Franke K."/>
            <person name="Drabent B."/>
            <person name="Doenecke D."/>
        </authorList>
    </citation>
    <scope>NUCLEOTIDE SEQUENCE [GENOMIC DNA]</scope>
    <scope>TISSUE SPECIFICITY</scope>
    <source>
        <strain>129/Sv</strain>
    </source>
</reference>
<reference key="3">
    <citation type="journal article" date="2002" name="Genomics">
        <title>The human and mouse replication-dependent histone genes.</title>
        <authorList>
            <person name="Marzluff W.F."/>
            <person name="Gongidi P."/>
            <person name="Woods K.R."/>
            <person name="Jin J."/>
            <person name="Maltais L.J."/>
        </authorList>
    </citation>
    <scope>NUCLEOTIDE SEQUENCE [GENOMIC DNA]</scope>
</reference>
<reference key="4">
    <citation type="journal article" date="2009" name="PLoS Biol.">
        <title>Lineage-specific biology revealed by a finished genome assembly of the mouse.</title>
        <authorList>
            <person name="Church D.M."/>
            <person name="Goodstadt L."/>
            <person name="Hillier L.W."/>
            <person name="Zody M.C."/>
            <person name="Goldstein S."/>
            <person name="She X."/>
            <person name="Bult C.J."/>
            <person name="Agarwala R."/>
            <person name="Cherry J.L."/>
            <person name="DiCuccio M."/>
            <person name="Hlavina W."/>
            <person name="Kapustin Y."/>
            <person name="Meric P."/>
            <person name="Maglott D."/>
            <person name="Birtle Z."/>
            <person name="Marques A.C."/>
            <person name="Graves T."/>
            <person name="Zhou S."/>
            <person name="Teague B."/>
            <person name="Potamousis K."/>
            <person name="Churas C."/>
            <person name="Place M."/>
            <person name="Herschleb J."/>
            <person name="Runnheim R."/>
            <person name="Forrest D."/>
            <person name="Amos-Landgraf J."/>
            <person name="Schwartz D.C."/>
            <person name="Cheng Z."/>
            <person name="Lindblad-Toh K."/>
            <person name="Eichler E.E."/>
            <person name="Ponting C.P."/>
        </authorList>
    </citation>
    <scope>NUCLEOTIDE SEQUENCE [LARGE SCALE GENOMIC DNA]</scope>
    <source>
        <strain>C57BL/6J</strain>
    </source>
</reference>
<reference key="5">
    <citation type="submission" date="2005-07" db="EMBL/GenBank/DDBJ databases">
        <authorList>
            <person name="Mural R.J."/>
            <person name="Adams M.D."/>
            <person name="Myers E.W."/>
            <person name="Smith H.O."/>
            <person name="Venter J.C."/>
        </authorList>
    </citation>
    <scope>NUCLEOTIDE SEQUENCE [LARGE SCALE GENOMIC DNA]</scope>
</reference>
<reference key="6">
    <citation type="journal article" date="2004" name="Genome Res.">
        <title>The status, quality, and expansion of the NIH full-length cDNA project: the Mammalian Gene Collection (MGC).</title>
        <authorList>
            <consortium name="The MGC Project Team"/>
        </authorList>
    </citation>
    <scope>NUCLEOTIDE SEQUENCE [LARGE SCALE MRNA]</scope>
</reference>
<reference key="7">
    <citation type="journal article" date="1996" name="Biochemistry">
        <title>In vivo phosphorylation of histone H1 variants during the cell cycle.</title>
        <authorList>
            <person name="Talasz H."/>
            <person name="Helliger W."/>
            <person name="Puschendorf B."/>
            <person name="Lindner H."/>
        </authorList>
    </citation>
    <scope>PHOSPHORYLATION</scope>
</reference>
<reference key="8">
    <citation type="journal article" date="2000" name="Exp. Cell Res.">
        <title>Spermatogenesis in mice is not affected by histone H1.1 deficiency.</title>
        <authorList>
            <person name="Rabini S."/>
            <person name="Franke K."/>
            <person name="Saftig P."/>
            <person name="Bode C."/>
            <person name="Doenecke D."/>
            <person name="Drabent B."/>
        </authorList>
    </citation>
    <scope>DISRUPTION PHENOTYPE</scope>
</reference>
<reference key="9">
    <citation type="journal article" date="2010" name="Cell">
        <title>A tissue-specific atlas of mouse protein phosphorylation and expression.</title>
        <authorList>
            <person name="Huttlin E.L."/>
            <person name="Jedrychowski M.P."/>
            <person name="Elias J.E."/>
            <person name="Goswami T."/>
            <person name="Rad R."/>
            <person name="Beausoleil S.A."/>
            <person name="Villen J."/>
            <person name="Haas W."/>
            <person name="Sowa M.E."/>
            <person name="Gygi S.P."/>
        </authorList>
    </citation>
    <scope>PHOSPHORYLATION [LARGE SCALE ANALYSIS] AT THR-201</scope>
    <scope>IDENTIFICATION BY MASS SPECTROMETRY [LARGE SCALE ANALYSIS]</scope>
    <source>
        <tissue>Spleen</tissue>
        <tissue>Testis</tissue>
    </source>
</reference>
<reference key="10">
    <citation type="journal article" date="2013" name="Mol. Cell">
        <title>SIRT5-mediated lysine desuccinylation impacts diverse metabolic pathways.</title>
        <authorList>
            <person name="Park J."/>
            <person name="Chen Y."/>
            <person name="Tishkoff D.X."/>
            <person name="Peng C."/>
            <person name="Tan M."/>
            <person name="Dai L."/>
            <person name="Xie Z."/>
            <person name="Zhang Y."/>
            <person name="Zwaans B.M."/>
            <person name="Skinner M.E."/>
            <person name="Lombard D.B."/>
            <person name="Zhao Y."/>
        </authorList>
    </citation>
    <scope>ACETYLATION [LARGE SCALE ANALYSIS] AT SER-2; LYS-17; LYS-77; LYS-92 AND LYS-121</scope>
    <scope>CLEAVAGE OF INITIATOR METHIONINE [LARGE SCALE ANALYSIS]</scope>
    <scope>IDENTIFICATION BY MASS SPECTROMETRY [LARGE SCALE ANALYSIS]</scope>
    <source>
        <tissue>Embryonic fibroblast</tissue>
    </source>
</reference>
<reference key="11">
    <citation type="journal article" date="2014" name="Nature">
        <title>Citrullination regulates pluripotency and histone H1 binding to chromatin.</title>
        <authorList>
            <person name="Christophorou M.A."/>
            <person name="Castelo-Branco G."/>
            <person name="Halley-Stott R.P."/>
            <person name="Oliveira C.S."/>
            <person name="Loos R."/>
            <person name="Radzisheuskaya A."/>
            <person name="Mowen K.A."/>
            <person name="Bertone P."/>
            <person name="Silva J.C."/>
            <person name="Zernicka-Goetz M."/>
            <person name="Nielsen M.L."/>
            <person name="Gurdon J.B."/>
            <person name="Kouzarides T."/>
        </authorList>
    </citation>
    <scope>CITRULLINATION AT ARG-56</scope>
</reference>
<dbReference type="EMBL" id="L26164">
    <property type="protein sequence ID" value="AAA37761.1"/>
    <property type="molecule type" value="Genomic_DNA"/>
</dbReference>
<dbReference type="EMBL" id="Y12290">
    <property type="protein sequence ID" value="CAA72969.1"/>
    <property type="molecule type" value="Genomic_DNA"/>
</dbReference>
<dbReference type="EMBL" id="AY158903">
    <property type="protein sequence ID" value="AAO06214.1"/>
    <property type="molecule type" value="Genomic_DNA"/>
</dbReference>
<dbReference type="EMBL" id="AL590388">
    <property type="status" value="NOT_ANNOTATED_CDS"/>
    <property type="molecule type" value="Genomic_DNA"/>
</dbReference>
<dbReference type="EMBL" id="CH466561">
    <property type="protein sequence ID" value="EDL32534.1"/>
    <property type="molecule type" value="Genomic_DNA"/>
</dbReference>
<dbReference type="EMBL" id="BC116820">
    <property type="protein sequence ID" value="AAI16821.1"/>
    <property type="molecule type" value="mRNA"/>
</dbReference>
<dbReference type="EMBL" id="BC116850">
    <property type="protein sequence ID" value="AAI16851.1"/>
    <property type="molecule type" value="mRNA"/>
</dbReference>
<dbReference type="CCDS" id="CCDS26369.1"/>
<dbReference type="PIR" id="S43949">
    <property type="entry name" value="S43949"/>
</dbReference>
<dbReference type="RefSeq" id="NP_085112.1">
    <property type="nucleotide sequence ID" value="NM_030609.3"/>
</dbReference>
<dbReference type="SMR" id="P43275"/>
<dbReference type="BioGRID" id="219818">
    <property type="interactions" value="21"/>
</dbReference>
<dbReference type="FunCoup" id="P43275">
    <property type="interactions" value="242"/>
</dbReference>
<dbReference type="IntAct" id="P43275">
    <property type="interactions" value="5"/>
</dbReference>
<dbReference type="MINT" id="P43275"/>
<dbReference type="STRING" id="10090.ENSMUSP00000062030"/>
<dbReference type="GlyGen" id="P43275">
    <property type="glycosylation" value="1 site, 1 O-linked glycan (1 site)"/>
</dbReference>
<dbReference type="iPTMnet" id="P43275"/>
<dbReference type="PhosphoSitePlus" id="P43275"/>
<dbReference type="SwissPalm" id="P43275"/>
<dbReference type="jPOST" id="P43275"/>
<dbReference type="PaxDb" id="10090-ENSMUSP00000062030"/>
<dbReference type="PeptideAtlas" id="P43275"/>
<dbReference type="ProteomicsDB" id="271372"/>
<dbReference type="Pumba" id="P43275"/>
<dbReference type="Antibodypedia" id="25489">
    <property type="antibodies" value="375 antibodies from 22 providers"/>
</dbReference>
<dbReference type="DNASU" id="80838"/>
<dbReference type="Ensembl" id="ENSMUST00000055770.4">
    <property type="protein sequence ID" value="ENSMUSP00000062030.2"/>
    <property type="gene ID" value="ENSMUSG00000049539.4"/>
</dbReference>
<dbReference type="GeneID" id="80838"/>
<dbReference type="KEGG" id="mmu:80838"/>
<dbReference type="UCSC" id="uc007puz.2">
    <property type="organism name" value="mouse"/>
</dbReference>
<dbReference type="AGR" id="MGI:1931523"/>
<dbReference type="CTD" id="80838"/>
<dbReference type="MGI" id="MGI:1931523">
    <property type="gene designation" value="H1f1"/>
</dbReference>
<dbReference type="VEuPathDB" id="HostDB:ENSMUSG00000049539"/>
<dbReference type="eggNOG" id="KOG4012">
    <property type="taxonomic scope" value="Eukaryota"/>
</dbReference>
<dbReference type="GeneTree" id="ENSGT00940000163269"/>
<dbReference type="HOGENOM" id="CLU_052897_7_0_1"/>
<dbReference type="InParanoid" id="P43275"/>
<dbReference type="OMA" id="HKEEART"/>
<dbReference type="OrthoDB" id="9634976at2759"/>
<dbReference type="PhylomeDB" id="P43275"/>
<dbReference type="TreeFam" id="TF313664"/>
<dbReference type="Reactome" id="R-MMU-140342">
    <property type="pathway name" value="Apoptosis induced DNA fragmentation"/>
</dbReference>
<dbReference type="Reactome" id="R-MMU-2559584">
    <property type="pathway name" value="Formation of Senescence-Associated Heterochromatin Foci (SAHF)"/>
</dbReference>
<dbReference type="BioGRID-ORCS" id="80838">
    <property type="hits" value="6 hits in 79 CRISPR screens"/>
</dbReference>
<dbReference type="PRO" id="PR:P43275"/>
<dbReference type="Proteomes" id="UP000000589">
    <property type="component" value="Chromosome 13"/>
</dbReference>
<dbReference type="RNAct" id="P43275">
    <property type="molecule type" value="protein"/>
</dbReference>
<dbReference type="Bgee" id="ENSMUSG00000049539">
    <property type="expression patterns" value="Expressed in spermatid and 61 other cell types or tissues"/>
</dbReference>
<dbReference type="GO" id="GO:0009986">
    <property type="term" value="C:cell surface"/>
    <property type="evidence" value="ECO:0000314"/>
    <property type="project" value="CAFA"/>
</dbReference>
<dbReference type="GO" id="GO:0000791">
    <property type="term" value="C:euchromatin"/>
    <property type="evidence" value="ECO:0007669"/>
    <property type="project" value="Ensembl"/>
</dbReference>
<dbReference type="GO" id="GO:0005654">
    <property type="term" value="C:nucleoplasm"/>
    <property type="evidence" value="ECO:0007669"/>
    <property type="project" value="Ensembl"/>
</dbReference>
<dbReference type="GO" id="GO:0000786">
    <property type="term" value="C:nucleosome"/>
    <property type="evidence" value="ECO:0007669"/>
    <property type="project" value="InterPro"/>
</dbReference>
<dbReference type="GO" id="GO:0005634">
    <property type="term" value="C:nucleus"/>
    <property type="evidence" value="ECO:0000314"/>
    <property type="project" value="CAFA"/>
</dbReference>
<dbReference type="GO" id="GO:0031982">
    <property type="term" value="C:vesicle"/>
    <property type="evidence" value="ECO:0000314"/>
    <property type="project" value="CAFA"/>
</dbReference>
<dbReference type="GO" id="GO:0031490">
    <property type="term" value="F:chromatin DNA binding"/>
    <property type="evidence" value="ECO:0007669"/>
    <property type="project" value="Ensembl"/>
</dbReference>
<dbReference type="GO" id="GO:0003677">
    <property type="term" value="F:DNA binding"/>
    <property type="evidence" value="ECO:0000314"/>
    <property type="project" value="MGI"/>
</dbReference>
<dbReference type="GO" id="GO:0008201">
    <property type="term" value="F:heparin binding"/>
    <property type="evidence" value="ECO:0000314"/>
    <property type="project" value="CAFA"/>
</dbReference>
<dbReference type="GO" id="GO:0030527">
    <property type="term" value="F:structural constituent of chromatin"/>
    <property type="evidence" value="ECO:0007669"/>
    <property type="project" value="InterPro"/>
</dbReference>
<dbReference type="GO" id="GO:0006334">
    <property type="term" value="P:nucleosome assembly"/>
    <property type="evidence" value="ECO:0007669"/>
    <property type="project" value="InterPro"/>
</dbReference>
<dbReference type="GO" id="GO:0048260">
    <property type="term" value="P:positive regulation of receptor-mediated endocytosis"/>
    <property type="evidence" value="ECO:0000314"/>
    <property type="project" value="CAFA"/>
</dbReference>
<dbReference type="GO" id="GO:0007283">
    <property type="term" value="P:spermatogenesis"/>
    <property type="evidence" value="ECO:0000316"/>
    <property type="project" value="MGI"/>
</dbReference>
<dbReference type="CDD" id="cd00073">
    <property type="entry name" value="H15"/>
    <property type="match status" value="1"/>
</dbReference>
<dbReference type="FunFam" id="1.10.10.10:FF:000075">
    <property type="entry name" value="Histone H1 like"/>
    <property type="match status" value="1"/>
</dbReference>
<dbReference type="Gene3D" id="1.10.10.10">
    <property type="entry name" value="Winged helix-like DNA-binding domain superfamily/Winged helix DNA-binding domain"/>
    <property type="match status" value="1"/>
</dbReference>
<dbReference type="InterPro" id="IPR005819">
    <property type="entry name" value="H1/H5"/>
</dbReference>
<dbReference type="InterPro" id="IPR005818">
    <property type="entry name" value="Histone_H1/H5_H15"/>
</dbReference>
<dbReference type="InterPro" id="IPR036388">
    <property type="entry name" value="WH-like_DNA-bd_sf"/>
</dbReference>
<dbReference type="InterPro" id="IPR036390">
    <property type="entry name" value="WH_DNA-bd_sf"/>
</dbReference>
<dbReference type="Pfam" id="PF00538">
    <property type="entry name" value="Linker_histone"/>
    <property type="match status" value="1"/>
</dbReference>
<dbReference type="PRINTS" id="PR00624">
    <property type="entry name" value="HISTONEH5"/>
</dbReference>
<dbReference type="SMART" id="SM00526">
    <property type="entry name" value="H15"/>
    <property type="match status" value="1"/>
</dbReference>
<dbReference type="SUPFAM" id="SSF46785">
    <property type="entry name" value="Winged helix' DNA-binding domain"/>
    <property type="match status" value="1"/>
</dbReference>
<dbReference type="PROSITE" id="PS51504">
    <property type="entry name" value="H15"/>
    <property type="match status" value="1"/>
</dbReference>
<accession>P43275</accession>
<accession>Q5SZ98</accession>
<gene>
    <name evidence="5" type="primary">H1-1</name>
    <name type="synonym">H1a</name>
    <name evidence="12" type="synonym">H1f1</name>
    <name type="synonym">Hist1h1a</name>
</gene>
<organism>
    <name type="scientific">Mus musculus</name>
    <name type="common">Mouse</name>
    <dbReference type="NCBI Taxonomy" id="10090"/>
    <lineage>
        <taxon>Eukaryota</taxon>
        <taxon>Metazoa</taxon>
        <taxon>Chordata</taxon>
        <taxon>Craniata</taxon>
        <taxon>Vertebrata</taxon>
        <taxon>Euteleostomi</taxon>
        <taxon>Mammalia</taxon>
        <taxon>Eutheria</taxon>
        <taxon>Euarchontoglires</taxon>
        <taxon>Glires</taxon>
        <taxon>Rodentia</taxon>
        <taxon>Myomorpha</taxon>
        <taxon>Muroidea</taxon>
        <taxon>Muridae</taxon>
        <taxon>Murinae</taxon>
        <taxon>Mus</taxon>
        <taxon>Mus</taxon>
    </lineage>
</organism>